<keyword id="KW-0997">Cell inner membrane</keyword>
<keyword id="KW-1003">Cell membrane</keyword>
<keyword id="KW-0472">Membrane</keyword>
<keyword id="KW-0511">Multifunctional enzyme</keyword>
<keyword id="KW-0520">NAD</keyword>
<keyword id="KW-0874">Quinone</keyword>
<keyword id="KW-1278">Translocase</keyword>
<keyword id="KW-0813">Transport</keyword>
<reference key="1">
    <citation type="journal article" date="2004" name="Proc. Natl. Acad. Sci. U.S.A.">
        <title>Genomic analysis of Bacteroides fragilis reveals extensive DNA inversions regulating cell surface adaptation.</title>
        <authorList>
            <person name="Kuwahara T."/>
            <person name="Yamashita A."/>
            <person name="Hirakawa H."/>
            <person name="Nakayama H."/>
            <person name="Toh H."/>
            <person name="Okada N."/>
            <person name="Kuhara S."/>
            <person name="Hattori M."/>
            <person name="Hayashi T."/>
            <person name="Ohnishi Y."/>
        </authorList>
    </citation>
    <scope>NUCLEOTIDE SEQUENCE [LARGE SCALE GENOMIC DNA]</scope>
    <source>
        <strain>YCH46</strain>
    </source>
</reference>
<feature type="chain" id="PRO_0000358616" description="NADH-quinone oxidoreductase subunit C/D">
    <location>
        <begin position="1"/>
        <end position="530"/>
    </location>
</feature>
<feature type="region of interest" description="NADH dehydrogenase I subunit C" evidence="2">
    <location>
        <begin position="1"/>
        <end position="144"/>
    </location>
</feature>
<feature type="region of interest" description="NADH dehydrogenase I subunit D" evidence="2">
    <location>
        <begin position="171"/>
        <end position="530"/>
    </location>
</feature>
<name>NUOCD_BACFR</name>
<dbReference type="EC" id="7.1.1.-" evidence="2"/>
<dbReference type="EMBL" id="AP006841">
    <property type="protein sequence ID" value="BAD47618.1"/>
    <property type="molecule type" value="Genomic_DNA"/>
</dbReference>
<dbReference type="RefSeq" id="WP_005785050.1">
    <property type="nucleotide sequence ID" value="NZ_UYXF01000001.1"/>
</dbReference>
<dbReference type="RefSeq" id="YP_098152.1">
    <property type="nucleotide sequence ID" value="NC_006347.1"/>
</dbReference>
<dbReference type="SMR" id="Q64Y08"/>
<dbReference type="STRING" id="295405.BF0867"/>
<dbReference type="KEGG" id="bfr:BF0867"/>
<dbReference type="PATRIC" id="fig|295405.11.peg.873"/>
<dbReference type="HOGENOM" id="CLU_015134_3_2_10"/>
<dbReference type="OrthoDB" id="9801496at2"/>
<dbReference type="Proteomes" id="UP000002197">
    <property type="component" value="Chromosome"/>
</dbReference>
<dbReference type="GO" id="GO:0030964">
    <property type="term" value="C:NADH dehydrogenase complex"/>
    <property type="evidence" value="ECO:0007669"/>
    <property type="project" value="InterPro"/>
</dbReference>
<dbReference type="GO" id="GO:0005886">
    <property type="term" value="C:plasma membrane"/>
    <property type="evidence" value="ECO:0007669"/>
    <property type="project" value="UniProtKB-SubCell"/>
</dbReference>
<dbReference type="GO" id="GO:0051287">
    <property type="term" value="F:NAD binding"/>
    <property type="evidence" value="ECO:0007669"/>
    <property type="project" value="InterPro"/>
</dbReference>
<dbReference type="GO" id="GO:0008137">
    <property type="term" value="F:NADH dehydrogenase (ubiquinone) activity"/>
    <property type="evidence" value="ECO:0007669"/>
    <property type="project" value="InterPro"/>
</dbReference>
<dbReference type="GO" id="GO:0050136">
    <property type="term" value="F:NADH:ubiquinone reductase (non-electrogenic) activity"/>
    <property type="evidence" value="ECO:0007669"/>
    <property type="project" value="UniProtKB-UniRule"/>
</dbReference>
<dbReference type="GO" id="GO:0048038">
    <property type="term" value="F:quinone binding"/>
    <property type="evidence" value="ECO:0007669"/>
    <property type="project" value="UniProtKB-KW"/>
</dbReference>
<dbReference type="Gene3D" id="1.10.645.10">
    <property type="entry name" value="Cytochrome-c3 Hydrogenase, chain B"/>
    <property type="match status" value="1"/>
</dbReference>
<dbReference type="Gene3D" id="3.30.460.80">
    <property type="entry name" value="NADH:ubiquinone oxidoreductase, 30kDa subunit"/>
    <property type="match status" value="1"/>
</dbReference>
<dbReference type="HAMAP" id="MF_01397">
    <property type="entry name" value="NDH1_NuoCD_2"/>
    <property type="match status" value="1"/>
</dbReference>
<dbReference type="HAMAP" id="MF_01358">
    <property type="entry name" value="NDH1_NuoD"/>
    <property type="match status" value="1"/>
</dbReference>
<dbReference type="InterPro" id="IPR001135">
    <property type="entry name" value="NADH_Q_OxRdtase_suD"/>
</dbReference>
<dbReference type="InterPro" id="IPR037232">
    <property type="entry name" value="NADH_quin_OxRdtase_su_C/D-like"/>
</dbReference>
<dbReference type="InterPro" id="IPR001268">
    <property type="entry name" value="NADH_UbQ_OxRdtase_30kDa_su"/>
</dbReference>
<dbReference type="InterPro" id="IPR020396">
    <property type="entry name" value="NADH_UbQ_OxRdtase_CS"/>
</dbReference>
<dbReference type="InterPro" id="IPR026662">
    <property type="entry name" value="NDH-1_subunit_CD"/>
</dbReference>
<dbReference type="InterPro" id="IPR022885">
    <property type="entry name" value="NDH1_su_D/H"/>
</dbReference>
<dbReference type="InterPro" id="IPR029014">
    <property type="entry name" value="NiFe-Hase_large"/>
</dbReference>
<dbReference type="NCBIfam" id="NF004739">
    <property type="entry name" value="PRK06075.1"/>
    <property type="match status" value="1"/>
</dbReference>
<dbReference type="PANTHER" id="PTHR11993:SF10">
    <property type="entry name" value="NADH DEHYDROGENASE [UBIQUINONE] IRON-SULFUR PROTEIN 2, MITOCHONDRIAL"/>
    <property type="match status" value="1"/>
</dbReference>
<dbReference type="PANTHER" id="PTHR11993">
    <property type="entry name" value="NADH-UBIQUINONE OXIDOREDUCTASE 49 KDA SUBUNIT"/>
    <property type="match status" value="1"/>
</dbReference>
<dbReference type="Pfam" id="PF00329">
    <property type="entry name" value="Complex1_30kDa"/>
    <property type="match status" value="1"/>
</dbReference>
<dbReference type="Pfam" id="PF00346">
    <property type="entry name" value="Complex1_49kDa"/>
    <property type="match status" value="2"/>
</dbReference>
<dbReference type="SUPFAM" id="SSF56762">
    <property type="entry name" value="HydB/Nqo4-like"/>
    <property type="match status" value="1"/>
</dbReference>
<dbReference type="SUPFAM" id="SSF143243">
    <property type="entry name" value="Nqo5-like"/>
    <property type="match status" value="1"/>
</dbReference>
<dbReference type="PROSITE" id="PS00542">
    <property type="entry name" value="COMPLEX1_30K"/>
    <property type="match status" value="1"/>
</dbReference>
<accession>Q64Y08</accession>
<comment type="function">
    <text evidence="1">NDH-1 shuttles electrons from NADH, via FMN and iron-sulfur (Fe-S) centers, to quinones in the respiratory chain. The immediate electron acceptor for the enzyme in this species is believed to be a menaquinone. Couples the redox reaction to proton translocation (for every two electrons transferred, four hydrogen ions are translocated across the cytoplasmic membrane), and thus conserves the redox energy in a proton gradient (By similarity).</text>
</comment>
<comment type="catalytic activity">
    <reaction evidence="2">
        <text>a quinone + NADH + 5 H(+)(in) = a quinol + NAD(+) + 4 H(+)(out)</text>
        <dbReference type="Rhea" id="RHEA:57888"/>
        <dbReference type="ChEBI" id="CHEBI:15378"/>
        <dbReference type="ChEBI" id="CHEBI:24646"/>
        <dbReference type="ChEBI" id="CHEBI:57540"/>
        <dbReference type="ChEBI" id="CHEBI:57945"/>
        <dbReference type="ChEBI" id="CHEBI:132124"/>
    </reaction>
</comment>
<comment type="subunit">
    <text evidence="2">NDH-1 is composed of 13 different subunits. Subunits NuoB, CD, E, F, and G constitute the peripheral sector of the complex.</text>
</comment>
<comment type="subcellular location">
    <subcellularLocation>
        <location evidence="2">Cell inner membrane</location>
        <topology evidence="2">Peripheral membrane protein</topology>
        <orientation evidence="1">Cytoplasmic side</orientation>
    </subcellularLocation>
</comment>
<comment type="similarity">
    <text evidence="2">In the N-terminal section; belongs to the complex I 30 kDa subunit family.</text>
</comment>
<comment type="similarity">
    <text evidence="2">In the C-terminal section; belongs to the complex I 49 kDa subunit family.</text>
</comment>
<evidence type="ECO:0000250" key="1"/>
<evidence type="ECO:0000255" key="2">
    <source>
        <dbReference type="HAMAP-Rule" id="MF_01397"/>
    </source>
</evidence>
<proteinExistence type="inferred from homology"/>
<gene>
    <name evidence="2" type="primary">nuoC</name>
    <name type="synonym">nuoCD</name>
    <name type="synonym">nuoD</name>
    <name type="ordered locus">BF0867</name>
</gene>
<protein>
    <recommendedName>
        <fullName evidence="2">NADH-quinone oxidoreductase subunit C/D</fullName>
        <ecNumber evidence="2">7.1.1.-</ecNumber>
    </recommendedName>
    <alternativeName>
        <fullName evidence="2">NADH dehydrogenase I subunit C/D</fullName>
    </alternativeName>
    <alternativeName>
        <fullName evidence="2">NDH-1 subunit C/D</fullName>
    </alternativeName>
</protein>
<organism>
    <name type="scientific">Bacteroides fragilis (strain YCH46)</name>
    <dbReference type="NCBI Taxonomy" id="295405"/>
    <lineage>
        <taxon>Bacteria</taxon>
        <taxon>Pseudomonadati</taxon>
        <taxon>Bacteroidota</taxon>
        <taxon>Bacteroidia</taxon>
        <taxon>Bacteroidales</taxon>
        <taxon>Bacteroidaceae</taxon>
        <taxon>Bacteroides</taxon>
    </lineage>
</organism>
<sequence>MEEIKYIEPAALHDEMLRLRNEKQMDFLESLTGMDWGVADEGDAPNVTRGLGVVYHLESTVTGERIAIKTSTNNRETPEIPSVSDIWKAADFNEREVFDYYGIVFIGHPDMRRLYLRNDWVGHPMRKDNNPEKDNPLRMDNEETYDTTREIELNPDGTYQTQENVIFDDREYVVNIGPQHPATHGVMRFRVSLEGETIKKLDANCGYIHRGIEKMNESLTYPQTLALTDRLDYLGAHQNRHALCMCIEKAMGIEVSERVKYIRTIMDELQRIDSHLLFYSCLAMDLGALTAFFYGFRDREMILDMFEETCGGRLIMNYNTIGGVQADLHPNFIPRVKKFIPYLRGIIHEYHDVFTGNVIARQRLKGVGVLSREDAISFGCTGGTGRASGWACDVRKRMPYGVYDKVDFKEIVYTEGDSFARYMVRMDEIMESLNIIEQLIDNIPEGPIQEKMKPIIRVPEGSYYTAVEGSRGEFGVFLESHGDKTPYRLHYRSTGLPLVSAVDTICRGAKIADLIAIGGTLDYVVPDIDR</sequence>